<reference key="1">
    <citation type="journal article" date="2005" name="DNA Res.">
        <title>Complete genome sequence of the facultative anaerobic magnetotactic bacterium Magnetospirillum sp. strain AMB-1.</title>
        <authorList>
            <person name="Matsunaga T."/>
            <person name="Okamura Y."/>
            <person name="Fukuda Y."/>
            <person name="Wahyudi A.T."/>
            <person name="Murase Y."/>
            <person name="Takeyama H."/>
        </authorList>
    </citation>
    <scope>NUCLEOTIDE SEQUENCE [LARGE SCALE GENOMIC DNA]</scope>
    <source>
        <strain>ATCC 700264 / AMB-1</strain>
    </source>
</reference>
<proteinExistence type="inferred from homology"/>
<organism>
    <name type="scientific">Paramagnetospirillum magneticum (strain ATCC 700264 / AMB-1)</name>
    <name type="common">Magnetospirillum magneticum</name>
    <dbReference type="NCBI Taxonomy" id="342108"/>
    <lineage>
        <taxon>Bacteria</taxon>
        <taxon>Pseudomonadati</taxon>
        <taxon>Pseudomonadota</taxon>
        <taxon>Alphaproteobacteria</taxon>
        <taxon>Rhodospirillales</taxon>
        <taxon>Magnetospirillaceae</taxon>
        <taxon>Paramagnetospirillum</taxon>
    </lineage>
</organism>
<dbReference type="EC" id="2.5.1.141" evidence="1"/>
<dbReference type="EMBL" id="AP007255">
    <property type="protein sequence ID" value="BAE51027.1"/>
    <property type="molecule type" value="Genomic_DNA"/>
</dbReference>
<dbReference type="RefSeq" id="WP_011384621.1">
    <property type="nucleotide sequence ID" value="NC_007626.1"/>
</dbReference>
<dbReference type="SMR" id="Q2W548"/>
<dbReference type="STRING" id="342108.amb2223"/>
<dbReference type="KEGG" id="mag:amb2223"/>
<dbReference type="HOGENOM" id="CLU_029631_0_1_5"/>
<dbReference type="OrthoDB" id="9814417at2"/>
<dbReference type="UniPathway" id="UPA00834">
    <property type="reaction ID" value="UER00712"/>
</dbReference>
<dbReference type="Proteomes" id="UP000007058">
    <property type="component" value="Chromosome"/>
</dbReference>
<dbReference type="GO" id="GO:0005886">
    <property type="term" value="C:plasma membrane"/>
    <property type="evidence" value="ECO:0007669"/>
    <property type="project" value="UniProtKB-SubCell"/>
</dbReference>
<dbReference type="GO" id="GO:0008495">
    <property type="term" value="F:protoheme IX farnesyltransferase activity"/>
    <property type="evidence" value="ECO:0007669"/>
    <property type="project" value="UniProtKB-UniRule"/>
</dbReference>
<dbReference type="GO" id="GO:0048034">
    <property type="term" value="P:heme O biosynthetic process"/>
    <property type="evidence" value="ECO:0007669"/>
    <property type="project" value="UniProtKB-UniRule"/>
</dbReference>
<dbReference type="CDD" id="cd13957">
    <property type="entry name" value="PT_UbiA_Cox10"/>
    <property type="match status" value="1"/>
</dbReference>
<dbReference type="Gene3D" id="1.10.357.140">
    <property type="entry name" value="UbiA prenyltransferase"/>
    <property type="match status" value="1"/>
</dbReference>
<dbReference type="HAMAP" id="MF_00154">
    <property type="entry name" value="CyoE_CtaB"/>
    <property type="match status" value="1"/>
</dbReference>
<dbReference type="InterPro" id="IPR006369">
    <property type="entry name" value="Protohaem_IX_farnesylTrfase"/>
</dbReference>
<dbReference type="InterPro" id="IPR000537">
    <property type="entry name" value="UbiA_prenyltransferase"/>
</dbReference>
<dbReference type="InterPro" id="IPR030470">
    <property type="entry name" value="UbiA_prenylTrfase_CS"/>
</dbReference>
<dbReference type="InterPro" id="IPR044878">
    <property type="entry name" value="UbiA_sf"/>
</dbReference>
<dbReference type="NCBIfam" id="TIGR01473">
    <property type="entry name" value="cyoE_ctaB"/>
    <property type="match status" value="1"/>
</dbReference>
<dbReference type="PANTHER" id="PTHR43448">
    <property type="entry name" value="PROTOHEME IX FARNESYLTRANSFERASE, MITOCHONDRIAL"/>
    <property type="match status" value="1"/>
</dbReference>
<dbReference type="PANTHER" id="PTHR43448:SF2">
    <property type="entry name" value="PROTOHEME IX FARNESYLTRANSFERASE, MITOCHONDRIAL"/>
    <property type="match status" value="1"/>
</dbReference>
<dbReference type="Pfam" id="PF01040">
    <property type="entry name" value="UbiA"/>
    <property type="match status" value="1"/>
</dbReference>
<dbReference type="PROSITE" id="PS00943">
    <property type="entry name" value="UBIA"/>
    <property type="match status" value="1"/>
</dbReference>
<keyword id="KW-0997">Cell inner membrane</keyword>
<keyword id="KW-1003">Cell membrane</keyword>
<keyword id="KW-0350">Heme biosynthesis</keyword>
<keyword id="KW-0472">Membrane</keyword>
<keyword id="KW-0808">Transferase</keyword>
<keyword id="KW-0812">Transmembrane</keyword>
<keyword id="KW-1133">Transmembrane helix</keyword>
<comment type="function">
    <text evidence="1">Converts heme B (protoheme IX) to heme O by substitution of the vinyl group on carbon 2 of heme B porphyrin ring with a hydroxyethyl farnesyl side group.</text>
</comment>
<comment type="catalytic activity">
    <reaction evidence="1">
        <text>heme b + (2E,6E)-farnesyl diphosphate + H2O = Fe(II)-heme o + diphosphate</text>
        <dbReference type="Rhea" id="RHEA:28070"/>
        <dbReference type="ChEBI" id="CHEBI:15377"/>
        <dbReference type="ChEBI" id="CHEBI:33019"/>
        <dbReference type="ChEBI" id="CHEBI:60344"/>
        <dbReference type="ChEBI" id="CHEBI:60530"/>
        <dbReference type="ChEBI" id="CHEBI:175763"/>
        <dbReference type="EC" id="2.5.1.141"/>
    </reaction>
</comment>
<comment type="pathway">
    <text evidence="1">Porphyrin-containing compound metabolism; heme O biosynthesis; heme O from protoheme: step 1/1.</text>
</comment>
<comment type="subcellular location">
    <subcellularLocation>
        <location evidence="1">Cell inner membrane</location>
        <topology evidence="1">Multi-pass membrane protein</topology>
    </subcellularLocation>
</comment>
<comment type="miscellaneous">
    <text evidence="1">Carbon 2 of the heme B porphyrin ring is defined according to the Fischer nomenclature.</text>
</comment>
<comment type="similarity">
    <text evidence="1">Belongs to the UbiA prenyltransferase family. Protoheme IX farnesyltransferase subfamily.</text>
</comment>
<feature type="chain" id="PRO_0000327076" description="Protoheme IX farnesyltransferase 2">
    <location>
        <begin position="1"/>
        <end position="288"/>
    </location>
</feature>
<feature type="transmembrane region" description="Helical" evidence="1">
    <location>
        <begin position="16"/>
        <end position="36"/>
    </location>
</feature>
<feature type="transmembrane region" description="Helical" evidence="1">
    <location>
        <begin position="38"/>
        <end position="58"/>
    </location>
</feature>
<feature type="transmembrane region" description="Helical" evidence="1">
    <location>
        <begin position="88"/>
        <end position="108"/>
    </location>
</feature>
<feature type="transmembrane region" description="Helical" evidence="1">
    <location>
        <begin position="111"/>
        <end position="131"/>
    </location>
</feature>
<feature type="transmembrane region" description="Helical" evidence="1">
    <location>
        <begin position="139"/>
        <end position="159"/>
    </location>
</feature>
<feature type="transmembrane region" description="Helical" evidence="1">
    <location>
        <begin position="166"/>
        <end position="186"/>
    </location>
</feature>
<feature type="transmembrane region" description="Helical" evidence="1">
    <location>
        <begin position="227"/>
        <end position="247"/>
    </location>
</feature>
<feature type="transmembrane region" description="Helical" evidence="1">
    <location>
        <begin position="266"/>
        <end position="286"/>
    </location>
</feature>
<evidence type="ECO:0000255" key="1">
    <source>
        <dbReference type="HAMAP-Rule" id="MF_00154"/>
    </source>
</evidence>
<gene>
    <name evidence="1" type="primary">ctaB2</name>
    <name type="ordered locus">amb2223</name>
</gene>
<protein>
    <recommendedName>
        <fullName evidence="1">Protoheme IX farnesyltransferase 2</fullName>
        <ecNumber evidence="1">2.5.1.141</ecNumber>
    </recommendedName>
    <alternativeName>
        <fullName evidence="1">Heme B farnesyltransferase 2</fullName>
    </alternativeName>
    <alternativeName>
        <fullName evidence="1">Heme O synthase 2</fullName>
    </alternativeName>
</protein>
<name>COXX2_PARM1</name>
<sequence>MTANLKVLASVFKLRIGVFCALAAIAGALATPGAVPDFAPVMAVALAVLLSAAAAGAFNHYWERDIDPMMNRTRNRPFATGQFAAGPLWPLGLLALTVAAVALAAFAANAWAALHVFLGAFVYGIVYTVWLKRRTAWNIVIGGLSGSFAVLAGAAVAVPTLSPESLILALVLFLWTPPHFWSLATALKDDYAAAGIPMLPVVCSETETNRIILANTIALVASSLLPAFFGAGPLYLGAAILGGGWFLYKSVALVRRPGRKAAMGNFFASLIQLVLLLTAVMVEPLLAG</sequence>
<accession>Q2W548</accession>